<proteinExistence type="inferred from homology"/>
<feature type="chain" id="PRO_1000067237" description="L-ectoine synthase">
    <location>
        <begin position="1"/>
        <end position="132"/>
    </location>
</feature>
<organism>
    <name type="scientific">Saccharophagus degradans (strain 2-40 / ATCC 43961 / DSM 17024)</name>
    <dbReference type="NCBI Taxonomy" id="203122"/>
    <lineage>
        <taxon>Bacteria</taxon>
        <taxon>Pseudomonadati</taxon>
        <taxon>Pseudomonadota</taxon>
        <taxon>Gammaproteobacteria</taxon>
        <taxon>Cellvibrionales</taxon>
        <taxon>Cellvibrionaceae</taxon>
        <taxon>Saccharophagus</taxon>
    </lineage>
</organism>
<gene>
    <name evidence="1" type="primary">ectC</name>
    <name type="ordered locus">Sde_1191</name>
</gene>
<sequence>MIVRTLAEAEASDRRVTSENWESVRLLLKDDNMGFSFHITTIFEGADFEMHYKNHLESVFCMSGEGEVETLADGKVYPIKPGTIYILDKHDKHVLRATKEMKMACVFNPPVTGKEVHDESGAYPLEAEAIVD</sequence>
<reference key="1">
    <citation type="journal article" date="2008" name="PLoS Genet.">
        <title>Complete genome sequence of the complex carbohydrate-degrading marine bacterium, Saccharophagus degradans strain 2-40 T.</title>
        <authorList>
            <person name="Weiner R.M."/>
            <person name="Taylor L.E. II"/>
            <person name="Henrissat B."/>
            <person name="Hauser L."/>
            <person name="Land M."/>
            <person name="Coutinho P.M."/>
            <person name="Rancurel C."/>
            <person name="Saunders E.H."/>
            <person name="Longmire A.G."/>
            <person name="Zhang H."/>
            <person name="Bayer E.A."/>
            <person name="Gilbert H.J."/>
            <person name="Larimer F."/>
            <person name="Zhulin I.B."/>
            <person name="Ekborg N.A."/>
            <person name="Lamed R."/>
            <person name="Richardson P.M."/>
            <person name="Borovok I."/>
            <person name="Hutcheson S."/>
        </authorList>
    </citation>
    <scope>NUCLEOTIDE SEQUENCE [LARGE SCALE GENOMIC DNA]</scope>
    <source>
        <strain>2-40 / ATCC 43961 / DSM 17024</strain>
    </source>
</reference>
<evidence type="ECO:0000255" key="1">
    <source>
        <dbReference type="HAMAP-Rule" id="MF_01255"/>
    </source>
</evidence>
<comment type="function">
    <text evidence="1">Catalyzes the circularization of gamma-N-acetyl-alpha,gamma-diaminobutyric acid (ADABA) to ectoine (1,4,5,6-tetrahydro-2-methyl-4-pyrimidine carboxylic acid), which is an excellent osmoprotectant.</text>
</comment>
<comment type="catalytic activity">
    <reaction evidence="1">
        <text>(2S)-4-acetamido-2-aminobutanoate = L-ectoine + H2O</text>
        <dbReference type="Rhea" id="RHEA:17281"/>
        <dbReference type="ChEBI" id="CHEBI:15377"/>
        <dbReference type="ChEBI" id="CHEBI:58515"/>
        <dbReference type="ChEBI" id="CHEBI:58929"/>
        <dbReference type="EC" id="4.2.1.108"/>
    </reaction>
</comment>
<comment type="pathway">
    <text evidence="1">Amine and polyamine biosynthesis; ectoine biosynthesis; L-ectoine from L-aspartate 4-semialdehyde: step 3/3.</text>
</comment>
<comment type="similarity">
    <text evidence="1">Belongs to the ectoine synthase family.</text>
</comment>
<dbReference type="EC" id="4.2.1.108" evidence="1"/>
<dbReference type="EMBL" id="CP000282">
    <property type="protein sequence ID" value="ABD80453.1"/>
    <property type="molecule type" value="Genomic_DNA"/>
</dbReference>
<dbReference type="RefSeq" id="WP_011467673.1">
    <property type="nucleotide sequence ID" value="NC_007912.1"/>
</dbReference>
<dbReference type="SMR" id="Q21LH6"/>
<dbReference type="STRING" id="203122.Sde_1191"/>
<dbReference type="GeneID" id="98612869"/>
<dbReference type="KEGG" id="sde:Sde_1191"/>
<dbReference type="eggNOG" id="COG1917">
    <property type="taxonomic scope" value="Bacteria"/>
</dbReference>
<dbReference type="HOGENOM" id="CLU_154525_0_0_6"/>
<dbReference type="OrthoDB" id="9801830at2"/>
<dbReference type="UniPathway" id="UPA00067">
    <property type="reaction ID" value="UER00123"/>
</dbReference>
<dbReference type="Proteomes" id="UP000001947">
    <property type="component" value="Chromosome"/>
</dbReference>
<dbReference type="GO" id="GO:0033990">
    <property type="term" value="F:ectoine synthase activity"/>
    <property type="evidence" value="ECO:0007669"/>
    <property type="project" value="UniProtKB-EC"/>
</dbReference>
<dbReference type="GO" id="GO:0019491">
    <property type="term" value="P:ectoine biosynthetic process"/>
    <property type="evidence" value="ECO:0007669"/>
    <property type="project" value="UniProtKB-UniRule"/>
</dbReference>
<dbReference type="CDD" id="cd06978">
    <property type="entry name" value="cupin_EctC"/>
    <property type="match status" value="1"/>
</dbReference>
<dbReference type="Gene3D" id="2.60.120.10">
    <property type="entry name" value="Jelly Rolls"/>
    <property type="match status" value="1"/>
</dbReference>
<dbReference type="HAMAP" id="MF_01255">
    <property type="entry name" value="Ectoine_synth"/>
    <property type="match status" value="1"/>
</dbReference>
<dbReference type="InterPro" id="IPR010462">
    <property type="entry name" value="Ectoine_synth"/>
</dbReference>
<dbReference type="InterPro" id="IPR014710">
    <property type="entry name" value="RmlC-like_jellyroll"/>
</dbReference>
<dbReference type="InterPro" id="IPR011051">
    <property type="entry name" value="RmlC_Cupin_sf"/>
</dbReference>
<dbReference type="NCBIfam" id="NF009806">
    <property type="entry name" value="PRK13290.1"/>
    <property type="match status" value="1"/>
</dbReference>
<dbReference type="PANTHER" id="PTHR39289">
    <property type="match status" value="1"/>
</dbReference>
<dbReference type="PANTHER" id="PTHR39289:SF1">
    <property type="entry name" value="L-ECTOINE SYNTHASE"/>
    <property type="match status" value="1"/>
</dbReference>
<dbReference type="Pfam" id="PF06339">
    <property type="entry name" value="Ectoine_synth"/>
    <property type="match status" value="1"/>
</dbReference>
<dbReference type="SUPFAM" id="SSF51182">
    <property type="entry name" value="RmlC-like cupins"/>
    <property type="match status" value="1"/>
</dbReference>
<protein>
    <recommendedName>
        <fullName evidence="1">L-ectoine synthase</fullName>
        <ecNumber evidence="1">4.2.1.108</ecNumber>
    </recommendedName>
    <alternativeName>
        <fullName evidence="1">N-acetyldiaminobutyrate dehydratase</fullName>
    </alternativeName>
</protein>
<name>ECTC_SACD2</name>
<accession>Q21LH6</accession>
<keyword id="KW-0456">Lyase</keyword>
<keyword id="KW-1185">Reference proteome</keyword>